<name>GYRB_RICTY</name>
<sequence length="807" mass="90952">MSGIEEKCNESSYSADSIKVLKGLEAVRKRPGMYIGDVGDGSGLHHMIYEVVDNSIDEALAGYCDLIRVTLNKNGSVTVSDNGRGIPVEIHEEEGISAAEVIMTQLHAGGKFDQHSYKISGGLHGVGVSVVNALSEWLELRIWRNNKEYFIRFNNGITEAPLSIVKENIDKKGTEVTFFPSVGIFTNIEFDFVTIEHRLRELAFLNSGVKILLIDNRFEEVKKVEFFYTGGIEAYVQYIDRAKHAIHPCIVVNTEHVESGISLELAIHWNDSYHENILCFTNNIRQRDGGTHLSAFKSAITRVITSYLDTTGLNKKTKHDFSGEDTREGICCVLSVKVPDPKFSSQTKDKLVSSEVRPVVENAVYTKVLEWFEEHPIEAKAIIAKIMEAANAREAARKARELTRRKSALEVSNLPGKLADCHAKDPAISELFIVEGDSAGGTAKQGRDSKIQAILPLRGKILNVERARFDKMLSSEQIGTLITALGISVEREFSLEKLRYHKVIIMTDADVDGSHIRTLLLTFFYRHMPELINKGYLYIAQPPLYKVKSGASELYLKNEQALQNYLIKSTINDTKLILDGQEQLIGYNLEDLINKVVQFNCLLDRASKKFNRSITEILAINDLFNKKIFEPESGSRLQKALDVLNNLEESPDKTNLQVLKHENRIEFFHFSRGLKNTKILLKEQLELFEFVEISQFALSIFDIFSKRLKLIVKGKEFDVVTPSQLLNTIIECGKKGITIQRFKGLGEMNSDQLWDTTLDPTKRTLLQVRVSEVDEAEGIFSTLMGDVVEPRRLFIQANALNVMNLDI</sequence>
<organism>
    <name type="scientific">Rickettsia typhi (strain ATCC VR-144 / Wilmington)</name>
    <dbReference type="NCBI Taxonomy" id="257363"/>
    <lineage>
        <taxon>Bacteria</taxon>
        <taxon>Pseudomonadati</taxon>
        <taxon>Pseudomonadota</taxon>
        <taxon>Alphaproteobacteria</taxon>
        <taxon>Rickettsiales</taxon>
        <taxon>Rickettsiaceae</taxon>
        <taxon>Rickettsieae</taxon>
        <taxon>Rickettsia</taxon>
        <taxon>typhus group</taxon>
    </lineage>
</organism>
<gene>
    <name evidence="1" type="primary">gyrB</name>
    <name type="ordered locus">RT0569</name>
</gene>
<evidence type="ECO:0000255" key="1">
    <source>
        <dbReference type="HAMAP-Rule" id="MF_01898"/>
    </source>
</evidence>
<reference key="1">
    <citation type="journal article" date="2004" name="J. Bacteriol.">
        <title>Complete genome sequence of Rickettsia typhi and comparison with sequences of other Rickettsiae.</title>
        <authorList>
            <person name="McLeod M.P."/>
            <person name="Qin X."/>
            <person name="Karpathy S.E."/>
            <person name="Gioia J."/>
            <person name="Highlander S.K."/>
            <person name="Fox G.E."/>
            <person name="McNeill T.Z."/>
            <person name="Jiang H."/>
            <person name="Muzny D."/>
            <person name="Jacob L.S."/>
            <person name="Hawes A.C."/>
            <person name="Sodergren E."/>
            <person name="Gill R."/>
            <person name="Hume J."/>
            <person name="Morgan M."/>
            <person name="Fan G."/>
            <person name="Amin A.G."/>
            <person name="Gibbs R.A."/>
            <person name="Hong C."/>
            <person name="Yu X.-J."/>
            <person name="Walker D.H."/>
            <person name="Weinstock G.M."/>
        </authorList>
    </citation>
    <scope>NUCLEOTIDE SEQUENCE [LARGE SCALE GENOMIC DNA]</scope>
    <source>
        <strain>ATCC VR-144 / Wilmington</strain>
    </source>
</reference>
<keyword id="KW-0067">ATP-binding</keyword>
<keyword id="KW-0963">Cytoplasm</keyword>
<keyword id="KW-0238">DNA-binding</keyword>
<keyword id="KW-0413">Isomerase</keyword>
<keyword id="KW-0460">Magnesium</keyword>
<keyword id="KW-0479">Metal-binding</keyword>
<keyword id="KW-0547">Nucleotide-binding</keyword>
<keyword id="KW-0799">Topoisomerase</keyword>
<feature type="chain" id="PRO_0000273112" description="DNA gyrase subunit B">
    <location>
        <begin position="1"/>
        <end position="807"/>
    </location>
</feature>
<feature type="domain" description="Toprim" evidence="1">
    <location>
        <begin position="429"/>
        <end position="543"/>
    </location>
</feature>
<feature type="binding site" evidence="1">
    <location>
        <position position="435"/>
    </location>
    <ligand>
        <name>Mg(2+)</name>
        <dbReference type="ChEBI" id="CHEBI:18420"/>
        <label>1</label>
        <note>catalytic</note>
    </ligand>
</feature>
<feature type="binding site" evidence="1">
    <location>
        <position position="508"/>
    </location>
    <ligand>
        <name>Mg(2+)</name>
        <dbReference type="ChEBI" id="CHEBI:18420"/>
        <label>1</label>
        <note>catalytic</note>
    </ligand>
</feature>
<feature type="binding site" evidence="1">
    <location>
        <position position="508"/>
    </location>
    <ligand>
        <name>Mg(2+)</name>
        <dbReference type="ChEBI" id="CHEBI:18420"/>
        <label>2</label>
    </ligand>
</feature>
<feature type="binding site" evidence="1">
    <location>
        <position position="510"/>
    </location>
    <ligand>
        <name>Mg(2+)</name>
        <dbReference type="ChEBI" id="CHEBI:18420"/>
        <label>2</label>
    </ligand>
</feature>
<feature type="site" description="Interaction with DNA" evidence="1">
    <location>
        <position position="460"/>
    </location>
</feature>
<feature type="site" description="Interaction with DNA" evidence="1">
    <location>
        <position position="463"/>
    </location>
</feature>
<protein>
    <recommendedName>
        <fullName evidence="1">DNA gyrase subunit B</fullName>
        <ecNumber evidence="1">5.6.2.2</ecNumber>
    </recommendedName>
</protein>
<proteinExistence type="inferred from homology"/>
<accession>Q68WF6</accession>
<comment type="function">
    <text evidence="1">A type II topoisomerase that negatively supercoils closed circular double-stranded (ds) DNA in an ATP-dependent manner to modulate DNA topology and maintain chromosomes in an underwound state. Negative supercoiling favors strand separation, and DNA replication, transcription, recombination and repair, all of which involve strand separation. Also able to catalyze the interconversion of other topological isomers of dsDNA rings, including catenanes and knotted rings. Type II topoisomerases break and join 2 DNA strands simultaneously in an ATP-dependent manner.</text>
</comment>
<comment type="catalytic activity">
    <reaction evidence="1">
        <text>ATP-dependent breakage, passage and rejoining of double-stranded DNA.</text>
        <dbReference type="EC" id="5.6.2.2"/>
    </reaction>
</comment>
<comment type="cofactor">
    <cofactor evidence="1">
        <name>Mg(2+)</name>
        <dbReference type="ChEBI" id="CHEBI:18420"/>
    </cofactor>
    <cofactor evidence="1">
        <name>Mn(2+)</name>
        <dbReference type="ChEBI" id="CHEBI:29035"/>
    </cofactor>
    <cofactor evidence="1">
        <name>Ca(2+)</name>
        <dbReference type="ChEBI" id="CHEBI:29108"/>
    </cofactor>
    <text evidence="1">Binds two Mg(2+) per subunit. The magnesium ions form salt bridges with both the protein and the DNA. Can also accept other divalent metal cations, such as Mn(2+) or Ca(2+).</text>
</comment>
<comment type="subunit">
    <text evidence="1">Heterotetramer, composed of two GyrA and two GyrB chains. In the heterotetramer, GyrA contains the active site tyrosine that forms a transient covalent intermediate with DNA, while GyrB binds cofactors and catalyzes ATP hydrolysis.</text>
</comment>
<comment type="subcellular location">
    <subcellularLocation>
        <location evidence="1">Cytoplasm</location>
    </subcellularLocation>
</comment>
<comment type="miscellaneous">
    <text evidence="1">Few gyrases are as efficient as E.coli at forming negative supercoils. Not all organisms have 2 type II topoisomerases; in organisms with a single type II topoisomerase this enzyme also has to decatenate newly replicated chromosomes.</text>
</comment>
<comment type="similarity">
    <text evidence="1">Belongs to the type II topoisomerase GyrB family.</text>
</comment>
<dbReference type="EC" id="5.6.2.2" evidence="1"/>
<dbReference type="EMBL" id="AE017197">
    <property type="protein sequence ID" value="AAU04036.1"/>
    <property type="molecule type" value="Genomic_DNA"/>
</dbReference>
<dbReference type="RefSeq" id="WP_011191017.1">
    <property type="nucleotide sequence ID" value="NC_006142.1"/>
</dbReference>
<dbReference type="SMR" id="Q68WF6"/>
<dbReference type="KEGG" id="rty:RT0569"/>
<dbReference type="eggNOG" id="COG0187">
    <property type="taxonomic scope" value="Bacteria"/>
</dbReference>
<dbReference type="HOGENOM" id="CLU_006146_0_1_5"/>
<dbReference type="OrthoDB" id="9802808at2"/>
<dbReference type="Proteomes" id="UP000000604">
    <property type="component" value="Chromosome"/>
</dbReference>
<dbReference type="GO" id="GO:0005694">
    <property type="term" value="C:chromosome"/>
    <property type="evidence" value="ECO:0007669"/>
    <property type="project" value="InterPro"/>
</dbReference>
<dbReference type="GO" id="GO:0005737">
    <property type="term" value="C:cytoplasm"/>
    <property type="evidence" value="ECO:0007669"/>
    <property type="project" value="UniProtKB-SubCell"/>
</dbReference>
<dbReference type="GO" id="GO:0005524">
    <property type="term" value="F:ATP binding"/>
    <property type="evidence" value="ECO:0007669"/>
    <property type="project" value="UniProtKB-UniRule"/>
</dbReference>
<dbReference type="GO" id="GO:0003677">
    <property type="term" value="F:DNA binding"/>
    <property type="evidence" value="ECO:0007669"/>
    <property type="project" value="UniProtKB-KW"/>
</dbReference>
<dbReference type="GO" id="GO:0003918">
    <property type="term" value="F:DNA topoisomerase type II (double strand cut, ATP-hydrolyzing) activity"/>
    <property type="evidence" value="ECO:0007669"/>
    <property type="project" value="UniProtKB-UniRule"/>
</dbReference>
<dbReference type="GO" id="GO:0046872">
    <property type="term" value="F:metal ion binding"/>
    <property type="evidence" value="ECO:0007669"/>
    <property type="project" value="UniProtKB-KW"/>
</dbReference>
<dbReference type="GO" id="GO:0006265">
    <property type="term" value="P:DNA topological change"/>
    <property type="evidence" value="ECO:0007669"/>
    <property type="project" value="UniProtKB-UniRule"/>
</dbReference>
<dbReference type="GO" id="GO:0006261">
    <property type="term" value="P:DNA-templated DNA replication"/>
    <property type="evidence" value="ECO:0007669"/>
    <property type="project" value="UniProtKB-UniRule"/>
</dbReference>
<dbReference type="CDD" id="cd16928">
    <property type="entry name" value="HATPase_GyrB-like"/>
    <property type="match status" value="1"/>
</dbReference>
<dbReference type="CDD" id="cd00822">
    <property type="entry name" value="TopoII_Trans_DNA_gyrase"/>
    <property type="match status" value="1"/>
</dbReference>
<dbReference type="CDD" id="cd03366">
    <property type="entry name" value="TOPRIM_TopoIIA_GyrB"/>
    <property type="match status" value="1"/>
</dbReference>
<dbReference type="FunFam" id="3.30.230.10:FF:000005">
    <property type="entry name" value="DNA gyrase subunit B"/>
    <property type="match status" value="1"/>
</dbReference>
<dbReference type="FunFam" id="3.30.565.10:FF:000002">
    <property type="entry name" value="DNA gyrase subunit B"/>
    <property type="match status" value="1"/>
</dbReference>
<dbReference type="FunFam" id="3.40.50.670:FF:000001">
    <property type="entry name" value="DNA topoisomerase 2"/>
    <property type="match status" value="1"/>
</dbReference>
<dbReference type="Gene3D" id="3.30.230.10">
    <property type="match status" value="1"/>
</dbReference>
<dbReference type="Gene3D" id="3.40.50.670">
    <property type="match status" value="2"/>
</dbReference>
<dbReference type="Gene3D" id="3.30.565.10">
    <property type="entry name" value="Histidine kinase-like ATPase, C-terminal domain"/>
    <property type="match status" value="1"/>
</dbReference>
<dbReference type="HAMAP" id="MF_01898">
    <property type="entry name" value="GyrB"/>
    <property type="match status" value="1"/>
</dbReference>
<dbReference type="InterPro" id="IPR002288">
    <property type="entry name" value="DNA_gyrase_B_C"/>
</dbReference>
<dbReference type="InterPro" id="IPR011557">
    <property type="entry name" value="GyrB"/>
</dbReference>
<dbReference type="InterPro" id="IPR036890">
    <property type="entry name" value="HATPase_C_sf"/>
</dbReference>
<dbReference type="InterPro" id="IPR020568">
    <property type="entry name" value="Ribosomal_Su5_D2-typ_SF"/>
</dbReference>
<dbReference type="InterPro" id="IPR014721">
    <property type="entry name" value="Ribsml_uS5_D2-typ_fold_subgr"/>
</dbReference>
<dbReference type="InterPro" id="IPR001241">
    <property type="entry name" value="Topo_IIA"/>
</dbReference>
<dbReference type="InterPro" id="IPR013760">
    <property type="entry name" value="Topo_IIA-like_dom_sf"/>
</dbReference>
<dbReference type="InterPro" id="IPR000565">
    <property type="entry name" value="Topo_IIA_B"/>
</dbReference>
<dbReference type="InterPro" id="IPR013759">
    <property type="entry name" value="Topo_IIA_B_C"/>
</dbReference>
<dbReference type="InterPro" id="IPR013506">
    <property type="entry name" value="Topo_IIA_bsu_dom2"/>
</dbReference>
<dbReference type="InterPro" id="IPR018522">
    <property type="entry name" value="TopoIIA_CS"/>
</dbReference>
<dbReference type="InterPro" id="IPR006171">
    <property type="entry name" value="TOPRIM_dom"/>
</dbReference>
<dbReference type="InterPro" id="IPR034160">
    <property type="entry name" value="TOPRIM_GyrB"/>
</dbReference>
<dbReference type="NCBIfam" id="TIGR01059">
    <property type="entry name" value="gyrB"/>
    <property type="match status" value="1"/>
</dbReference>
<dbReference type="NCBIfam" id="NF004189">
    <property type="entry name" value="PRK05644.1"/>
    <property type="match status" value="1"/>
</dbReference>
<dbReference type="NCBIfam" id="NF011501">
    <property type="entry name" value="PRK14939.1"/>
    <property type="match status" value="1"/>
</dbReference>
<dbReference type="PANTHER" id="PTHR45866:SF1">
    <property type="entry name" value="DNA GYRASE SUBUNIT B, MITOCHONDRIAL"/>
    <property type="match status" value="1"/>
</dbReference>
<dbReference type="PANTHER" id="PTHR45866">
    <property type="entry name" value="DNA GYRASE/TOPOISOMERASE SUBUNIT B"/>
    <property type="match status" value="1"/>
</dbReference>
<dbReference type="Pfam" id="PF00204">
    <property type="entry name" value="DNA_gyraseB"/>
    <property type="match status" value="1"/>
</dbReference>
<dbReference type="Pfam" id="PF00986">
    <property type="entry name" value="DNA_gyraseB_C"/>
    <property type="match status" value="1"/>
</dbReference>
<dbReference type="Pfam" id="PF02518">
    <property type="entry name" value="HATPase_c"/>
    <property type="match status" value="1"/>
</dbReference>
<dbReference type="Pfam" id="PF01751">
    <property type="entry name" value="Toprim"/>
    <property type="match status" value="1"/>
</dbReference>
<dbReference type="PRINTS" id="PR01159">
    <property type="entry name" value="DNAGYRASEB"/>
</dbReference>
<dbReference type="PRINTS" id="PR00418">
    <property type="entry name" value="TPI2FAMILY"/>
</dbReference>
<dbReference type="SMART" id="SM00387">
    <property type="entry name" value="HATPase_c"/>
    <property type="match status" value="1"/>
</dbReference>
<dbReference type="SMART" id="SM00433">
    <property type="entry name" value="TOP2c"/>
    <property type="match status" value="1"/>
</dbReference>
<dbReference type="SUPFAM" id="SSF55874">
    <property type="entry name" value="ATPase domain of HSP90 chaperone/DNA topoisomerase II/histidine kinase"/>
    <property type="match status" value="1"/>
</dbReference>
<dbReference type="SUPFAM" id="SSF54211">
    <property type="entry name" value="Ribosomal protein S5 domain 2-like"/>
    <property type="match status" value="1"/>
</dbReference>
<dbReference type="SUPFAM" id="SSF56719">
    <property type="entry name" value="Type II DNA topoisomerase"/>
    <property type="match status" value="1"/>
</dbReference>
<dbReference type="PROSITE" id="PS00177">
    <property type="entry name" value="TOPOISOMERASE_II"/>
    <property type="match status" value="1"/>
</dbReference>
<dbReference type="PROSITE" id="PS50880">
    <property type="entry name" value="TOPRIM"/>
    <property type="match status" value="1"/>
</dbReference>